<protein>
    <recommendedName>
        <fullName>Putative transporter AmpG 2</fullName>
    </recommendedName>
</protein>
<dbReference type="EMBL" id="CP000053">
    <property type="protein sequence ID" value="AAY61116.1"/>
    <property type="status" value="ALT_INIT"/>
    <property type="molecule type" value="Genomic_DNA"/>
</dbReference>
<dbReference type="SMR" id="Q4UMU2"/>
<dbReference type="KEGG" id="rfe:RF_0265"/>
<dbReference type="eggNOG" id="COG2271">
    <property type="taxonomic scope" value="Bacteria"/>
</dbReference>
<dbReference type="HOGENOM" id="CLU_029352_1_2_5"/>
<dbReference type="OrthoDB" id="9787815at2"/>
<dbReference type="Proteomes" id="UP000008548">
    <property type="component" value="Chromosome"/>
</dbReference>
<dbReference type="GO" id="GO:0005886">
    <property type="term" value="C:plasma membrane"/>
    <property type="evidence" value="ECO:0007669"/>
    <property type="project" value="UniProtKB-SubCell"/>
</dbReference>
<dbReference type="GO" id="GO:0022857">
    <property type="term" value="F:transmembrane transporter activity"/>
    <property type="evidence" value="ECO:0007669"/>
    <property type="project" value="InterPro"/>
</dbReference>
<dbReference type="Gene3D" id="1.20.1250.20">
    <property type="entry name" value="MFS general substrate transporter like domains"/>
    <property type="match status" value="2"/>
</dbReference>
<dbReference type="InterPro" id="IPR004752">
    <property type="entry name" value="AmpG_permease/AT-1"/>
</dbReference>
<dbReference type="InterPro" id="IPR011701">
    <property type="entry name" value="MFS"/>
</dbReference>
<dbReference type="InterPro" id="IPR036259">
    <property type="entry name" value="MFS_trans_sf"/>
</dbReference>
<dbReference type="PANTHER" id="PTHR12778:SF10">
    <property type="entry name" value="MAJOR FACILITATOR SUPERFAMILY DOMAIN-CONTAINING PROTEIN 3"/>
    <property type="match status" value="1"/>
</dbReference>
<dbReference type="PANTHER" id="PTHR12778">
    <property type="entry name" value="SOLUTE CARRIER FAMILY 33 ACETYL-COA TRANSPORTER -RELATED"/>
    <property type="match status" value="1"/>
</dbReference>
<dbReference type="Pfam" id="PF07690">
    <property type="entry name" value="MFS_1"/>
    <property type="match status" value="1"/>
</dbReference>
<dbReference type="SUPFAM" id="SSF103473">
    <property type="entry name" value="MFS general substrate transporter"/>
    <property type="match status" value="1"/>
</dbReference>
<name>AMPG2_RICFE</name>
<organism>
    <name type="scientific">Rickettsia felis (strain ATCC VR-1525 / URRWXCal2)</name>
    <name type="common">Rickettsia azadi</name>
    <dbReference type="NCBI Taxonomy" id="315456"/>
    <lineage>
        <taxon>Bacteria</taxon>
        <taxon>Pseudomonadati</taxon>
        <taxon>Pseudomonadota</taxon>
        <taxon>Alphaproteobacteria</taxon>
        <taxon>Rickettsiales</taxon>
        <taxon>Rickettsiaceae</taxon>
        <taxon>Rickettsieae</taxon>
        <taxon>Rickettsia</taxon>
        <taxon>spotted fever group</taxon>
    </lineage>
</organism>
<accession>Q4UMU2</accession>
<reference key="1">
    <citation type="journal article" date="2005" name="PLoS Biol.">
        <title>The genome sequence of Rickettsia felis identifies the first putative conjugative plasmid in an obligate intracellular parasite.</title>
        <authorList>
            <person name="Ogata H."/>
            <person name="Renesto P."/>
            <person name="Audic S."/>
            <person name="Robert C."/>
            <person name="Blanc G."/>
            <person name="Fournier P.-E."/>
            <person name="Parinello H."/>
            <person name="Claverie J.-M."/>
            <person name="Raoult D."/>
        </authorList>
    </citation>
    <scope>NUCLEOTIDE SEQUENCE [LARGE SCALE GENOMIC DNA]</scope>
    <source>
        <strain>ATCC VR-1525 / URRWXCal2</strain>
    </source>
</reference>
<gene>
    <name type="primary">ampG2</name>
    <name type="ordered locus">RF_0265</name>
</gene>
<sequence>MNFNFSRFQYISNIFFILIISFPGGLIYLLTGSTLSFWLRESGFDKITIGLFSLVNFIHIFKFLWGPLLEKVSFAPLSKRGYKYCLIIALVSCICCVYILTNFNPNTHFIPFALCLVAVAFFSSIYDMLLQSSQMLLITNKNWGISEAACTTGFRIGILIAGSGALYLSTIISWQDVYRSMAILCIPSLLLIIIYPLKFKDKTIINDFDRFWYAFYDFIKKPKWLIIVSFMLLYRLQDNFLSIMPNMFYLDIGYTKKDLALGYKAFGMCAAILGGFIGGFLCRKYEYFYLLKRALIYHALSSLSFLFLYFYNRDITSLYIAVFFQEFTKGLTMSPFFSYQLRCCSSKYCITQIALITSIAYISTILFGSISGYAATYLGWTYFFLVAGFCFIPAYILIKYLPPYVIPS</sequence>
<proteinExistence type="inferred from homology"/>
<feature type="chain" id="PRO_0000281096" description="Putative transporter AmpG 2">
    <location>
        <begin position="1"/>
        <end position="408"/>
    </location>
</feature>
<feature type="transmembrane region" description="Helical" evidence="2">
    <location>
        <begin position="10"/>
        <end position="30"/>
    </location>
</feature>
<feature type="transmembrane region" description="Helical" evidence="2">
    <location>
        <begin position="49"/>
        <end position="69"/>
    </location>
</feature>
<feature type="transmembrane region" description="Helical" evidence="2">
    <location>
        <begin position="84"/>
        <end position="104"/>
    </location>
</feature>
<feature type="transmembrane region" description="Helical" evidence="2">
    <location>
        <begin position="109"/>
        <end position="129"/>
    </location>
</feature>
<feature type="transmembrane region" description="Helical" evidence="2">
    <location>
        <begin position="154"/>
        <end position="174"/>
    </location>
</feature>
<feature type="transmembrane region" description="Helical" evidence="2">
    <location>
        <begin position="177"/>
        <end position="197"/>
    </location>
</feature>
<feature type="transmembrane region" description="Helical" evidence="2">
    <location>
        <begin position="224"/>
        <end position="244"/>
    </location>
</feature>
<feature type="transmembrane region" description="Helical" evidence="2">
    <location>
        <begin position="261"/>
        <end position="281"/>
    </location>
</feature>
<feature type="transmembrane region" description="Helical" evidence="2">
    <location>
        <begin position="294"/>
        <end position="311"/>
    </location>
</feature>
<feature type="transmembrane region" description="Helical" evidence="2">
    <location>
        <begin position="315"/>
        <end position="337"/>
    </location>
</feature>
<feature type="transmembrane region" description="Helical" evidence="2">
    <location>
        <begin position="353"/>
        <end position="373"/>
    </location>
</feature>
<feature type="transmembrane region" description="Helical" evidence="2">
    <location>
        <begin position="378"/>
        <end position="398"/>
    </location>
</feature>
<keyword id="KW-0997">Cell inner membrane</keyword>
<keyword id="KW-1003">Cell membrane</keyword>
<keyword id="KW-0472">Membrane</keyword>
<keyword id="KW-0812">Transmembrane</keyword>
<keyword id="KW-1133">Transmembrane helix</keyword>
<keyword id="KW-0813">Transport</keyword>
<evidence type="ECO:0000250" key="1"/>
<evidence type="ECO:0000255" key="2"/>
<evidence type="ECO:0000305" key="3"/>
<comment type="subcellular location">
    <subcellularLocation>
        <location evidence="1">Cell inner membrane</location>
        <topology evidence="1">Multi-pass membrane protein</topology>
    </subcellularLocation>
</comment>
<comment type="similarity">
    <text evidence="3">Belongs to the major facilitator superfamily.</text>
</comment>
<comment type="sequence caution" evidence="3">
    <conflict type="erroneous initiation">
        <sequence resource="EMBL-CDS" id="AAY61116"/>
    </conflict>
</comment>